<evidence type="ECO:0000255" key="1">
    <source>
        <dbReference type="HAMAP-Rule" id="MF_01241"/>
    </source>
</evidence>
<gene>
    <name evidence="1" type="primary">nagB</name>
    <name type="ordered locus">SAS0527</name>
</gene>
<sequence length="252" mass="28467">MKVLNLGSKKQASFYVACELYKEMAFNQHCKLGLATGGTMTDLYEQLVKLLNKNQLNVDNVSTFNLDEYVGLTASHPQSYHYYMDDMLFKQYPYFNRKNIHIPNGDADDMNAEASKYNDVLEQQGQRDIQILGIGENGHIGFNEPGTPFDSVTHIVDLTESTIKANSRYFKNEDDVPKQAISMGLANILQAKRIILLAFGEKKRAAITHLLNQEISVDVPATLLHKHPNVEIYLDDEACPKNVAKIHVDEMD</sequence>
<reference key="1">
    <citation type="journal article" date="2004" name="Proc. Natl. Acad. Sci. U.S.A.">
        <title>Complete genomes of two clinical Staphylococcus aureus strains: evidence for the rapid evolution of virulence and drug resistance.</title>
        <authorList>
            <person name="Holden M.T.G."/>
            <person name="Feil E.J."/>
            <person name="Lindsay J.A."/>
            <person name="Peacock S.J."/>
            <person name="Day N.P.J."/>
            <person name="Enright M.C."/>
            <person name="Foster T.J."/>
            <person name="Moore C.E."/>
            <person name="Hurst L."/>
            <person name="Atkin R."/>
            <person name="Barron A."/>
            <person name="Bason N."/>
            <person name="Bentley S.D."/>
            <person name="Chillingworth C."/>
            <person name="Chillingworth T."/>
            <person name="Churcher C."/>
            <person name="Clark L."/>
            <person name="Corton C."/>
            <person name="Cronin A."/>
            <person name="Doggett J."/>
            <person name="Dowd L."/>
            <person name="Feltwell T."/>
            <person name="Hance Z."/>
            <person name="Harris B."/>
            <person name="Hauser H."/>
            <person name="Holroyd S."/>
            <person name="Jagels K."/>
            <person name="James K.D."/>
            <person name="Lennard N."/>
            <person name="Line A."/>
            <person name="Mayes R."/>
            <person name="Moule S."/>
            <person name="Mungall K."/>
            <person name="Ormond D."/>
            <person name="Quail M.A."/>
            <person name="Rabbinowitsch E."/>
            <person name="Rutherford K.M."/>
            <person name="Sanders M."/>
            <person name="Sharp S."/>
            <person name="Simmonds M."/>
            <person name="Stevens K."/>
            <person name="Whitehead S."/>
            <person name="Barrell B.G."/>
            <person name="Spratt B.G."/>
            <person name="Parkhill J."/>
        </authorList>
    </citation>
    <scope>NUCLEOTIDE SEQUENCE [LARGE SCALE GENOMIC DNA]</scope>
    <source>
        <strain>MSSA476</strain>
    </source>
</reference>
<name>NAGB_STAAS</name>
<comment type="function">
    <text evidence="1">Catalyzes the reversible isomerization-deamination of glucosamine 6-phosphate (GlcN6P) to form fructose 6-phosphate (Fru6P) and ammonium ion.</text>
</comment>
<comment type="catalytic activity">
    <reaction evidence="1">
        <text>alpha-D-glucosamine 6-phosphate + H2O = beta-D-fructose 6-phosphate + NH4(+)</text>
        <dbReference type="Rhea" id="RHEA:12172"/>
        <dbReference type="ChEBI" id="CHEBI:15377"/>
        <dbReference type="ChEBI" id="CHEBI:28938"/>
        <dbReference type="ChEBI" id="CHEBI:57634"/>
        <dbReference type="ChEBI" id="CHEBI:75989"/>
        <dbReference type="EC" id="3.5.99.6"/>
    </reaction>
</comment>
<comment type="pathway">
    <text evidence="1">Amino-sugar metabolism; N-acetylneuraminate degradation; D-fructose 6-phosphate from N-acetylneuraminate: step 5/5.</text>
</comment>
<comment type="similarity">
    <text evidence="1">Belongs to the glucosamine/galactosamine-6-phosphate isomerase family. NagB subfamily.</text>
</comment>
<proteinExistence type="inferred from homology"/>
<accession>Q6GBR8</accession>
<keyword id="KW-0119">Carbohydrate metabolism</keyword>
<keyword id="KW-0378">Hydrolase</keyword>
<protein>
    <recommendedName>
        <fullName evidence="1">Glucosamine-6-phosphate deaminase</fullName>
        <ecNumber evidence="1">3.5.99.6</ecNumber>
    </recommendedName>
    <alternativeName>
        <fullName evidence="1">GlcN6P deaminase</fullName>
        <shortName evidence="1">GNPDA</shortName>
    </alternativeName>
    <alternativeName>
        <fullName evidence="1">Glucosamine-6-phosphate isomerase</fullName>
    </alternativeName>
</protein>
<feature type="chain" id="PRO_0000160166" description="Glucosamine-6-phosphate deaminase">
    <location>
        <begin position="1"/>
        <end position="252"/>
    </location>
</feature>
<feature type="active site" description="Proton acceptor; for enolization step" evidence="1">
    <location>
        <position position="67"/>
    </location>
</feature>
<feature type="active site" description="For ring-opening step" evidence="1">
    <location>
        <position position="137"/>
    </location>
</feature>
<feature type="active site" description="Proton acceptor; for ring-opening step" evidence="1">
    <location>
        <position position="139"/>
    </location>
</feature>
<feature type="active site" description="For ring-opening step" evidence="1">
    <location>
        <position position="144"/>
    </location>
</feature>
<dbReference type="EC" id="3.5.99.6" evidence="1"/>
<dbReference type="EMBL" id="BX571857">
    <property type="protein sequence ID" value="CAG42302.1"/>
    <property type="molecule type" value="Genomic_DNA"/>
</dbReference>
<dbReference type="RefSeq" id="WP_000866415.1">
    <property type="nucleotide sequence ID" value="NC_002953.3"/>
</dbReference>
<dbReference type="SMR" id="Q6GBR8"/>
<dbReference type="KEGG" id="sas:SAS0527"/>
<dbReference type="HOGENOM" id="CLU_049611_1_1_9"/>
<dbReference type="UniPathway" id="UPA00629">
    <property type="reaction ID" value="UER00684"/>
</dbReference>
<dbReference type="GO" id="GO:0005737">
    <property type="term" value="C:cytoplasm"/>
    <property type="evidence" value="ECO:0007669"/>
    <property type="project" value="TreeGrafter"/>
</dbReference>
<dbReference type="GO" id="GO:0004342">
    <property type="term" value="F:glucosamine-6-phosphate deaminase activity"/>
    <property type="evidence" value="ECO:0007669"/>
    <property type="project" value="UniProtKB-UniRule"/>
</dbReference>
<dbReference type="GO" id="GO:0042802">
    <property type="term" value="F:identical protein binding"/>
    <property type="evidence" value="ECO:0007669"/>
    <property type="project" value="TreeGrafter"/>
</dbReference>
<dbReference type="GO" id="GO:0005975">
    <property type="term" value="P:carbohydrate metabolic process"/>
    <property type="evidence" value="ECO:0007669"/>
    <property type="project" value="InterPro"/>
</dbReference>
<dbReference type="GO" id="GO:0006043">
    <property type="term" value="P:glucosamine catabolic process"/>
    <property type="evidence" value="ECO:0007669"/>
    <property type="project" value="TreeGrafter"/>
</dbReference>
<dbReference type="GO" id="GO:0006046">
    <property type="term" value="P:N-acetylglucosamine catabolic process"/>
    <property type="evidence" value="ECO:0007669"/>
    <property type="project" value="TreeGrafter"/>
</dbReference>
<dbReference type="GO" id="GO:0019262">
    <property type="term" value="P:N-acetylneuraminate catabolic process"/>
    <property type="evidence" value="ECO:0007669"/>
    <property type="project" value="UniProtKB-UniRule"/>
</dbReference>
<dbReference type="CDD" id="cd01399">
    <property type="entry name" value="GlcN6P_deaminase"/>
    <property type="match status" value="1"/>
</dbReference>
<dbReference type="FunFam" id="3.40.50.1360:FF:000003">
    <property type="entry name" value="Glucosamine-6-phosphate deaminase"/>
    <property type="match status" value="1"/>
</dbReference>
<dbReference type="Gene3D" id="3.40.50.1360">
    <property type="match status" value="1"/>
</dbReference>
<dbReference type="HAMAP" id="MF_01241">
    <property type="entry name" value="GlcN6P_deamin"/>
    <property type="match status" value="1"/>
</dbReference>
<dbReference type="InterPro" id="IPR006148">
    <property type="entry name" value="Glc/Gal-6P_isomerase"/>
</dbReference>
<dbReference type="InterPro" id="IPR004547">
    <property type="entry name" value="Glucosamine6P_isomerase"/>
</dbReference>
<dbReference type="InterPro" id="IPR018321">
    <property type="entry name" value="Glucosamine6P_isomerase_CS"/>
</dbReference>
<dbReference type="InterPro" id="IPR037171">
    <property type="entry name" value="NagB/RpiA_transferase-like"/>
</dbReference>
<dbReference type="NCBIfam" id="TIGR00502">
    <property type="entry name" value="nagB"/>
    <property type="match status" value="1"/>
</dbReference>
<dbReference type="PANTHER" id="PTHR11280">
    <property type="entry name" value="GLUCOSAMINE-6-PHOSPHATE ISOMERASE"/>
    <property type="match status" value="1"/>
</dbReference>
<dbReference type="PANTHER" id="PTHR11280:SF5">
    <property type="entry name" value="GLUCOSAMINE-6-PHOSPHATE ISOMERASE"/>
    <property type="match status" value="1"/>
</dbReference>
<dbReference type="Pfam" id="PF01182">
    <property type="entry name" value="Glucosamine_iso"/>
    <property type="match status" value="1"/>
</dbReference>
<dbReference type="SUPFAM" id="SSF100950">
    <property type="entry name" value="NagB/RpiA/CoA transferase-like"/>
    <property type="match status" value="1"/>
</dbReference>
<dbReference type="PROSITE" id="PS01161">
    <property type="entry name" value="GLC_GALNAC_ISOMERASE"/>
    <property type="match status" value="1"/>
</dbReference>
<organism>
    <name type="scientific">Staphylococcus aureus (strain MSSA476)</name>
    <dbReference type="NCBI Taxonomy" id="282459"/>
    <lineage>
        <taxon>Bacteria</taxon>
        <taxon>Bacillati</taxon>
        <taxon>Bacillota</taxon>
        <taxon>Bacilli</taxon>
        <taxon>Bacillales</taxon>
        <taxon>Staphylococcaceae</taxon>
        <taxon>Staphylococcus</taxon>
    </lineage>
</organism>